<evidence type="ECO:0000255" key="1">
    <source>
        <dbReference type="HAMAP-Rule" id="MF_00484"/>
    </source>
</evidence>
<comment type="function">
    <text evidence="1">Synthesizes alpha-1,4-glucan chains using ADP-glucose.</text>
</comment>
<comment type="catalytic activity">
    <reaction evidence="1">
        <text>[(1-&gt;4)-alpha-D-glucosyl](n) + ADP-alpha-D-glucose = [(1-&gt;4)-alpha-D-glucosyl](n+1) + ADP + H(+)</text>
        <dbReference type="Rhea" id="RHEA:18189"/>
        <dbReference type="Rhea" id="RHEA-COMP:9584"/>
        <dbReference type="Rhea" id="RHEA-COMP:9587"/>
        <dbReference type="ChEBI" id="CHEBI:15378"/>
        <dbReference type="ChEBI" id="CHEBI:15444"/>
        <dbReference type="ChEBI" id="CHEBI:57498"/>
        <dbReference type="ChEBI" id="CHEBI:456216"/>
        <dbReference type="EC" id="2.4.1.21"/>
    </reaction>
</comment>
<comment type="pathway">
    <text evidence="1">Glycan biosynthesis; glycogen biosynthesis.</text>
</comment>
<comment type="similarity">
    <text evidence="1">Belongs to the glycosyltransferase 1 family. Bacterial/plant glycogen synthase subfamily.</text>
</comment>
<accession>A7HJT8</accession>
<feature type="chain" id="PRO_1000072415" description="Glycogen synthase">
    <location>
        <begin position="1"/>
        <end position="485"/>
    </location>
</feature>
<feature type="binding site" evidence="1">
    <location>
        <position position="15"/>
    </location>
    <ligand>
        <name>ADP-alpha-D-glucose</name>
        <dbReference type="ChEBI" id="CHEBI:57498"/>
    </ligand>
</feature>
<proteinExistence type="inferred from homology"/>
<organism>
    <name type="scientific">Fervidobacterium nodosum (strain ATCC 35602 / DSM 5306 / Rt17-B1)</name>
    <dbReference type="NCBI Taxonomy" id="381764"/>
    <lineage>
        <taxon>Bacteria</taxon>
        <taxon>Thermotogati</taxon>
        <taxon>Thermotogota</taxon>
        <taxon>Thermotogae</taxon>
        <taxon>Thermotogales</taxon>
        <taxon>Fervidobacteriaceae</taxon>
        <taxon>Fervidobacterium</taxon>
    </lineage>
</organism>
<name>GLGA_FERNB</name>
<reference key="1">
    <citation type="submission" date="2007-07" db="EMBL/GenBank/DDBJ databases">
        <title>Complete sequence of Fervidobacterium nodosum Rt17-B1.</title>
        <authorList>
            <consortium name="US DOE Joint Genome Institute"/>
            <person name="Copeland A."/>
            <person name="Lucas S."/>
            <person name="Lapidus A."/>
            <person name="Barry K."/>
            <person name="Glavina del Rio T."/>
            <person name="Dalin E."/>
            <person name="Tice H."/>
            <person name="Pitluck S."/>
            <person name="Saunders E."/>
            <person name="Brettin T."/>
            <person name="Bruce D."/>
            <person name="Detter J.C."/>
            <person name="Han C."/>
            <person name="Schmutz J."/>
            <person name="Larimer F."/>
            <person name="Land M."/>
            <person name="Hauser L."/>
            <person name="Kyrpides N."/>
            <person name="Mikhailova N."/>
            <person name="Nelson K."/>
            <person name="Gogarten J.P."/>
            <person name="Noll K."/>
            <person name="Richardson P."/>
        </authorList>
    </citation>
    <scope>NUCLEOTIDE SEQUENCE [LARGE SCALE GENOMIC DNA]</scope>
    <source>
        <strain>ATCC 35602 / DSM 5306 / Rt17-B1</strain>
    </source>
</reference>
<dbReference type="EC" id="2.4.1.21" evidence="1"/>
<dbReference type="EMBL" id="CP000771">
    <property type="protein sequence ID" value="ABS60171.1"/>
    <property type="molecule type" value="Genomic_DNA"/>
</dbReference>
<dbReference type="RefSeq" id="WP_011993493.1">
    <property type="nucleotide sequence ID" value="NC_009718.1"/>
</dbReference>
<dbReference type="SMR" id="A7HJT8"/>
<dbReference type="STRING" id="381764.Fnod_0306"/>
<dbReference type="CAZy" id="GT5">
    <property type="family name" value="Glycosyltransferase Family 5"/>
</dbReference>
<dbReference type="KEGG" id="fno:Fnod_0306"/>
<dbReference type="eggNOG" id="COG0297">
    <property type="taxonomic scope" value="Bacteria"/>
</dbReference>
<dbReference type="HOGENOM" id="CLU_009583_18_2_0"/>
<dbReference type="OrthoDB" id="9808590at2"/>
<dbReference type="UniPathway" id="UPA00164"/>
<dbReference type="Proteomes" id="UP000002415">
    <property type="component" value="Chromosome"/>
</dbReference>
<dbReference type="GO" id="GO:0009011">
    <property type="term" value="F:alpha-1,4-glucan glucosyltransferase (ADP-glucose donor) activity"/>
    <property type="evidence" value="ECO:0007669"/>
    <property type="project" value="UniProtKB-UniRule"/>
</dbReference>
<dbReference type="GO" id="GO:0004373">
    <property type="term" value="F:alpha-1,4-glucan glucosyltransferase (UDP-glucose donor) activity"/>
    <property type="evidence" value="ECO:0007669"/>
    <property type="project" value="InterPro"/>
</dbReference>
<dbReference type="GO" id="GO:0005978">
    <property type="term" value="P:glycogen biosynthetic process"/>
    <property type="evidence" value="ECO:0007669"/>
    <property type="project" value="UniProtKB-UniRule"/>
</dbReference>
<dbReference type="CDD" id="cd03791">
    <property type="entry name" value="GT5_Glycogen_synthase_DULL1-like"/>
    <property type="match status" value="1"/>
</dbReference>
<dbReference type="Gene3D" id="3.40.50.2000">
    <property type="entry name" value="Glycogen Phosphorylase B"/>
    <property type="match status" value="2"/>
</dbReference>
<dbReference type="HAMAP" id="MF_00484">
    <property type="entry name" value="Glycogen_synth"/>
    <property type="match status" value="1"/>
</dbReference>
<dbReference type="InterPro" id="IPR001296">
    <property type="entry name" value="Glyco_trans_1"/>
</dbReference>
<dbReference type="InterPro" id="IPR011835">
    <property type="entry name" value="GS/SS"/>
</dbReference>
<dbReference type="InterPro" id="IPR013534">
    <property type="entry name" value="Starch_synth_cat_dom"/>
</dbReference>
<dbReference type="NCBIfam" id="TIGR02095">
    <property type="entry name" value="glgA"/>
    <property type="match status" value="1"/>
</dbReference>
<dbReference type="PANTHER" id="PTHR45825:SF11">
    <property type="entry name" value="ALPHA AMYLASE DOMAIN-CONTAINING PROTEIN"/>
    <property type="match status" value="1"/>
</dbReference>
<dbReference type="PANTHER" id="PTHR45825">
    <property type="entry name" value="GRANULE-BOUND STARCH SYNTHASE 1, CHLOROPLASTIC/AMYLOPLASTIC"/>
    <property type="match status" value="1"/>
</dbReference>
<dbReference type="Pfam" id="PF08323">
    <property type="entry name" value="Glyco_transf_5"/>
    <property type="match status" value="1"/>
</dbReference>
<dbReference type="Pfam" id="PF00534">
    <property type="entry name" value="Glycos_transf_1"/>
    <property type="match status" value="1"/>
</dbReference>
<dbReference type="SUPFAM" id="SSF53756">
    <property type="entry name" value="UDP-Glycosyltransferase/glycogen phosphorylase"/>
    <property type="match status" value="1"/>
</dbReference>
<sequence>MRIAMVSYEVYPFAKVGGLADVVGALPKYLERQNINVDIYMPYHKKVKQNAEKYGWAIEKITEKVDASMLRTEEKFEIYKTMLPGTKEVNVFLINNEYYFNADEVYAGPDLAEQAIFFSYSVIEAIRKLNFEYDIVHVNDWQTALIPVYLKTVFRDDPLLSKIATVLTIHNLGYQGIFEPEYLRFAGLPDYLYNIDGIEFYGKINFLKGGIIFSDIINTVSPTYAKEIQQKEYGEKLEGVLRARSSDLYGILNGIDYEEFNPLTDNKIYVNYDLNTIEKKKENKKLLQKELGLPERDVPMFGMINRLVDQKGLDIMAEIMDYVSLFDIQFVLLGTGEEKYENMFKKLGEKYPEKYSINLKFDIVLAQKIYAGCDMFLMPSRYEPCGLGQMYSLRYGTIPIVRYTGGLADTVKEYNPETKEGNGFGFEGFDPAHLLKAMARAIYFYNSKEDWNTLIKNAMTMDLSWDKSAKEYVKLYQRAKSKVQR</sequence>
<keyword id="KW-0320">Glycogen biosynthesis</keyword>
<keyword id="KW-0328">Glycosyltransferase</keyword>
<keyword id="KW-1185">Reference proteome</keyword>
<keyword id="KW-0808">Transferase</keyword>
<gene>
    <name evidence="1" type="primary">glgA</name>
    <name type="ordered locus">Fnod_0306</name>
</gene>
<protein>
    <recommendedName>
        <fullName evidence="1">Glycogen synthase</fullName>
        <ecNumber evidence="1">2.4.1.21</ecNumber>
    </recommendedName>
    <alternativeName>
        <fullName evidence="1">Starch [bacterial glycogen] synthase</fullName>
    </alternativeName>
</protein>